<gene>
    <name evidence="1" type="primary">M</name>
</gene>
<protein>
    <recommendedName>
        <fullName evidence="1">Matrix protein 2</fullName>
    </recommendedName>
    <alternativeName>
        <fullName evidence="1">Proton channel protein M2</fullName>
    </alternativeName>
</protein>
<reference key="1">
    <citation type="journal article" date="1992" name="Virology">
        <title>Sequence changes in the live attenuated, cold-adapted variants of influenza A/Leningrad/134/57 (H2N2) virus.</title>
        <authorList>
            <person name="Klimov A.I."/>
            <person name="Cox N.J."/>
            <person name="Yotov W.V."/>
            <person name="Rocha E."/>
            <person name="Alexandrova G.I."/>
            <person name="Kendal A.P."/>
        </authorList>
    </citation>
    <scope>NUCLEOTIDE SEQUENCE</scope>
</reference>
<reference key="2">
    <citation type="journal article" date="2004" name="Virus Res.">
        <title>Assembly and budding of influenza virus.</title>
        <authorList>
            <person name="Nayak D.P."/>
            <person name="Hui E.K."/>
            <person name="Barman S."/>
        </authorList>
    </citation>
    <scope>REVIEW</scope>
</reference>
<reference key="3">
    <citation type="journal article" date="2003" name="FEBS Lett.">
        <title>Proton conduction through the M2 protein of the influenza A virus; a quantitative, mechanistic analysis of experimental data.</title>
        <authorList>
            <person name="Lear J.D."/>
        </authorList>
    </citation>
    <scope>REVIEW</scope>
</reference>
<reference key="4">
    <citation type="journal article" date="2003" name="FEBS Lett.">
        <title>Computational studies of proton transport through the M2 channel.</title>
        <authorList>
            <person name="Wu Y."/>
            <person name="Voth G.A."/>
        </authorList>
    </citation>
    <scope>REVIEW</scope>
</reference>
<accession>P67867</accession>
<accession>P26130</accession>
<organism>
    <name type="scientific">Influenza A virus (strain A/Leningrad/134/47/1957 H2N2)</name>
    <dbReference type="NCBI Taxonomy" id="380983"/>
    <lineage>
        <taxon>Viruses</taxon>
        <taxon>Riboviria</taxon>
        <taxon>Orthornavirae</taxon>
        <taxon>Negarnaviricota</taxon>
        <taxon>Polyploviricotina</taxon>
        <taxon>Insthoviricetes</taxon>
        <taxon>Articulavirales</taxon>
        <taxon>Orthomyxoviridae</taxon>
        <taxon>Alphainfluenzavirus</taxon>
        <taxon>Alphainfluenzavirus influenzae</taxon>
        <taxon>Influenza A virus</taxon>
    </lineage>
</organism>
<sequence>MSLLTEVETPIRNEWGCRCNDSSDPLVVAASIIGILHLILWILDRLFFKCNYRFFKHGLKRGASTEGVPESMREEYRKEQQSAVDTDDSHFVSIELE</sequence>
<organismHost>
    <name type="scientific">Aves</name>
    <dbReference type="NCBI Taxonomy" id="8782"/>
</organismHost>
<organismHost>
    <name type="scientific">Homo sapiens</name>
    <name type="common">Human</name>
    <dbReference type="NCBI Taxonomy" id="9606"/>
</organismHost>
<feature type="chain" id="PRO_0000078887" description="Matrix protein 2">
    <location>
        <begin position="1"/>
        <end position="97"/>
    </location>
</feature>
<feature type="topological domain" description="Virion surface" evidence="1">
    <location>
        <begin position="1"/>
        <end position="22"/>
    </location>
</feature>
<feature type="transmembrane region" description="Helical; Signal-anchor for type III membrane protein" evidence="1">
    <location>
        <begin position="23"/>
        <end position="43"/>
    </location>
</feature>
<feature type="topological domain" description="Intravirion" evidence="1">
    <location>
        <begin position="44"/>
        <end position="97"/>
    </location>
</feature>
<feature type="region of interest" description="Disordered" evidence="2">
    <location>
        <begin position="62"/>
        <end position="89"/>
    </location>
</feature>
<feature type="compositionally biased region" description="Basic and acidic residues" evidence="2">
    <location>
        <begin position="71"/>
        <end position="80"/>
    </location>
</feature>
<feature type="site" description="Essential for channel activity, possibly by being protonated during channel activation, and by forming the channel gate and the selective filter" evidence="1">
    <location>
        <position position="37"/>
    </location>
</feature>
<feature type="site" description="Seems to be involved in pH gating" evidence="1">
    <location>
        <position position="41"/>
    </location>
</feature>
<feature type="modified residue" description="Phosphoserine; by host" evidence="1">
    <location>
        <position position="64"/>
    </location>
</feature>
<feature type="modified residue" description="Phosphoserine; by host" evidence="1">
    <location>
        <position position="82"/>
    </location>
</feature>
<feature type="modified residue" description="Phosphoserine; by host" evidence="1">
    <location>
        <position position="93"/>
    </location>
</feature>
<feature type="lipid moiety-binding region" description="S-palmitoyl cysteine; by host" evidence="1">
    <location>
        <position position="50"/>
    </location>
</feature>
<feature type="glycosylation site" description="N-linked (GlcNAc...) asparagine; by host" evidence="1">
    <location>
        <position position="20"/>
    </location>
</feature>
<feature type="disulfide bond" description="Interchain (with C-17)" evidence="1">
    <location>
        <position position="17"/>
    </location>
</feature>
<feature type="disulfide bond" description="Interchain (with C-19)" evidence="1">
    <location>
        <position position="19"/>
    </location>
</feature>
<evidence type="ECO:0000255" key="1">
    <source>
        <dbReference type="HAMAP-Rule" id="MF_04069"/>
    </source>
</evidence>
<evidence type="ECO:0000256" key="2">
    <source>
        <dbReference type="SAM" id="MobiDB-lite"/>
    </source>
</evidence>
<proteinExistence type="inferred from homology"/>
<keyword id="KW-0025">Alternative splicing</keyword>
<keyword id="KW-1015">Disulfide bond</keyword>
<keyword id="KW-0325">Glycoprotein</keyword>
<keyword id="KW-1032">Host cell membrane</keyword>
<keyword id="KW-1043">Host membrane</keyword>
<keyword id="KW-0945">Host-virus interaction</keyword>
<keyword id="KW-0375">Hydrogen ion transport</keyword>
<keyword id="KW-1083">Inhibition of host autophagy by virus</keyword>
<keyword id="KW-0407">Ion channel</keyword>
<keyword id="KW-0406">Ion transport</keyword>
<keyword id="KW-0449">Lipoprotein</keyword>
<keyword id="KW-0472">Membrane</keyword>
<keyword id="KW-0564">Palmitate</keyword>
<keyword id="KW-0597">Phosphoprotein</keyword>
<keyword id="KW-0735">Signal-anchor</keyword>
<keyword id="KW-0812">Transmembrane</keyword>
<keyword id="KW-1133">Transmembrane helix</keyword>
<keyword id="KW-0813">Transport</keyword>
<keyword id="KW-1182">Viral ion channel</keyword>
<keyword id="KW-0946">Virion</keyword>
<dbReference type="EMBL" id="M81582">
    <property type="protein sequence ID" value="AAA19196.1"/>
    <property type="molecule type" value="Unassigned_RNA"/>
</dbReference>
<dbReference type="SMR" id="P67867"/>
<dbReference type="GlyCosmos" id="P67867">
    <property type="glycosylation" value="1 site, No reported glycans"/>
</dbReference>
<dbReference type="GO" id="GO:0020002">
    <property type="term" value="C:host cell plasma membrane"/>
    <property type="evidence" value="ECO:0007669"/>
    <property type="project" value="UniProtKB-SubCell"/>
</dbReference>
<dbReference type="GO" id="GO:0016020">
    <property type="term" value="C:membrane"/>
    <property type="evidence" value="ECO:0007669"/>
    <property type="project" value="UniProtKB-UniRule"/>
</dbReference>
<dbReference type="GO" id="GO:0055036">
    <property type="term" value="C:virion membrane"/>
    <property type="evidence" value="ECO:0007669"/>
    <property type="project" value="UniProtKB-SubCell"/>
</dbReference>
<dbReference type="GO" id="GO:0005216">
    <property type="term" value="F:monoatomic ion channel activity"/>
    <property type="evidence" value="ECO:0007669"/>
    <property type="project" value="UniProtKB-UniRule"/>
</dbReference>
<dbReference type="GO" id="GO:0015078">
    <property type="term" value="F:proton transmembrane transporter activity"/>
    <property type="evidence" value="ECO:0007669"/>
    <property type="project" value="UniProtKB-UniRule"/>
</dbReference>
<dbReference type="GO" id="GO:0051259">
    <property type="term" value="P:protein complex oligomerization"/>
    <property type="evidence" value="ECO:0007669"/>
    <property type="project" value="UniProtKB-UniRule"/>
</dbReference>
<dbReference type="GO" id="GO:0044694">
    <property type="term" value="P:symbiont genome entry into host cell via pore formation in plasma membrane"/>
    <property type="evidence" value="ECO:0007669"/>
    <property type="project" value="UniProtKB-UniRule"/>
</dbReference>
<dbReference type="GO" id="GO:0140321">
    <property type="term" value="P:symbiont-mediated suppression of host autophagy"/>
    <property type="evidence" value="ECO:0007669"/>
    <property type="project" value="UniProtKB-KW"/>
</dbReference>
<dbReference type="Gene3D" id="6.10.250.1640">
    <property type="match status" value="1"/>
</dbReference>
<dbReference type="HAMAP" id="MF_04069">
    <property type="entry name" value="INFV_M2"/>
    <property type="match status" value="1"/>
</dbReference>
<dbReference type="InterPro" id="IPR002089">
    <property type="entry name" value="Flu_M2"/>
</dbReference>
<dbReference type="Pfam" id="PF00599">
    <property type="entry name" value="Flu_M2"/>
    <property type="match status" value="1"/>
</dbReference>
<name>M2_I57A3</name>
<comment type="function">
    <text evidence="1">Forms a proton-selective ion channel that is necessary for the efficient release of the viral genome during virus entry. After attaching to the cell surface, the virion enters the cell by endocytosis. Acidification of the endosome triggers M2 ion channel activity. The influx of protons into virion interior is believed to disrupt interactions between the viral ribonucleoprotein (RNP), matrix protein 1 (M1), and lipid bilayers, thereby freeing the viral genome from interaction with viral proteins and enabling RNA segments to migrate to the host cell nucleus, where influenza virus RNA transcription and replication occur. Also plays a role in viral proteins secretory pathway. Elevates the intravesicular pH of normally acidic compartments, such as trans-Golgi network, preventing newly formed hemagglutinin from premature switching to the fusion-active conformation.</text>
</comment>
<comment type="activity regulation">
    <text>The M2 protein from most influenza A strains is inhibited by amantadine and rimantadine, resulting in viral uncoating incapacity. Emergence of amantadine-resistant variants is usually rapid.</text>
</comment>
<comment type="subunit">
    <text evidence="1">Homotetramer; composed of two disulfide-linked dimers held together by non-covalent interactions. May interact with matrix protein 1.</text>
</comment>
<comment type="subcellular location">
    <subcellularLocation>
        <location evidence="1">Virion membrane</location>
    </subcellularLocation>
    <subcellularLocation>
        <location evidence="1">Host apical cell membrane</location>
        <topology evidence="1">Single-pass type III membrane protein</topology>
    </subcellularLocation>
    <text evidence="1">Abundantly expressed at the apical plasma membrane in infected polarized epithelial cells, in close proximity to budding and assembled virions. Minor component of virions (only 16-20 molecules/virion).</text>
</comment>
<comment type="alternative products">
    <event type="alternative splicing"/>
    <isoform>
        <id>P67867-1</id>
        <id>P26130-1</id>
        <name>M2</name>
        <sequence type="displayed"/>
    </isoform>
    <isoform>
        <id>P67865-1</id>
        <id>P26128-1</id>
        <name>M1</name>
        <sequence type="external"/>
    </isoform>
    <text>Only the first 9 residues are shared by the 2 isoforms.</text>
</comment>
<comment type="domain">
    <text evidence="1">Cytoplasmic tail plays an important role in virion assembly and morphogenesis.</text>
</comment>
<comment type="miscellaneous">
    <text evidence="1">When the channel is activated, one or more imidazole moieties of His-37 probably become bi-protonated.</text>
</comment>
<comment type="similarity">
    <text evidence="1">Belongs to the influenza viruses matrix protein M2 family.</text>
</comment>